<proteinExistence type="inferred from homology"/>
<sequence>MRITIVTIFPEMVEVIKKYGVIARAVERGIVEINVENLRDYTTDRHRTVDDYQYGGGYGMVMKPEPFFRFYESYVEKYGKPYVILTSPQGRIFNYKIAEELSKKDDIVIFCGRYEGIDERVMSIVDDEISIGDYILTGGELPAMVITDAVVRLVPGVVERESVERESFHQGLLDHPVYTRPYEYKGMKVPDVLLSGDHEKVELWRRKESIKKTLAKRPDLFLAKELDEMDKLAIIELFRELMEKC</sequence>
<protein>
    <recommendedName>
        <fullName evidence="1">tRNA (guanine-N(1)-)-methyltransferase</fullName>
        <ecNumber evidence="1">2.1.1.228</ecNumber>
    </recommendedName>
    <alternativeName>
        <fullName evidence="1">M1G-methyltransferase</fullName>
    </alternativeName>
    <alternativeName>
        <fullName evidence="1">tRNA [GM37] methyltransferase</fullName>
    </alternativeName>
</protein>
<comment type="function">
    <text evidence="1">Specifically methylates guanosine-37 in various tRNAs.</text>
</comment>
<comment type="catalytic activity">
    <reaction evidence="1">
        <text>guanosine(37) in tRNA + S-adenosyl-L-methionine = N(1)-methylguanosine(37) in tRNA + S-adenosyl-L-homocysteine + H(+)</text>
        <dbReference type="Rhea" id="RHEA:36899"/>
        <dbReference type="Rhea" id="RHEA-COMP:10145"/>
        <dbReference type="Rhea" id="RHEA-COMP:10147"/>
        <dbReference type="ChEBI" id="CHEBI:15378"/>
        <dbReference type="ChEBI" id="CHEBI:57856"/>
        <dbReference type="ChEBI" id="CHEBI:59789"/>
        <dbReference type="ChEBI" id="CHEBI:73542"/>
        <dbReference type="ChEBI" id="CHEBI:74269"/>
        <dbReference type="EC" id="2.1.1.228"/>
    </reaction>
</comment>
<comment type="subunit">
    <text evidence="1">Homodimer.</text>
</comment>
<comment type="subcellular location">
    <subcellularLocation>
        <location evidence="1">Cytoplasm</location>
    </subcellularLocation>
</comment>
<comment type="similarity">
    <text evidence="1">Belongs to the RNA methyltransferase TrmD family.</text>
</comment>
<evidence type="ECO:0000255" key="1">
    <source>
        <dbReference type="HAMAP-Rule" id="MF_00605"/>
    </source>
</evidence>
<organism>
    <name type="scientific">Thermotoga petrophila (strain ATCC BAA-488 / DSM 13995 / JCM 10881 / RKU-1)</name>
    <dbReference type="NCBI Taxonomy" id="390874"/>
    <lineage>
        <taxon>Bacteria</taxon>
        <taxon>Thermotogati</taxon>
        <taxon>Thermotogota</taxon>
        <taxon>Thermotogae</taxon>
        <taxon>Thermotogales</taxon>
        <taxon>Thermotogaceae</taxon>
        <taxon>Thermotoga</taxon>
    </lineage>
</organism>
<keyword id="KW-0963">Cytoplasm</keyword>
<keyword id="KW-0489">Methyltransferase</keyword>
<keyword id="KW-0949">S-adenosyl-L-methionine</keyword>
<keyword id="KW-0808">Transferase</keyword>
<keyword id="KW-0819">tRNA processing</keyword>
<gene>
    <name evidence="1" type="primary">trmD</name>
    <name type="ordered locus">Tpet_1223</name>
</gene>
<feature type="chain" id="PRO_1000006538" description="tRNA (guanine-N(1)-)-methyltransferase">
    <location>
        <begin position="1"/>
        <end position="245"/>
    </location>
</feature>
<feature type="binding site" evidence="1">
    <location>
        <position position="112"/>
    </location>
    <ligand>
        <name>S-adenosyl-L-methionine</name>
        <dbReference type="ChEBI" id="CHEBI:59789"/>
    </ligand>
</feature>
<feature type="binding site" evidence="1">
    <location>
        <begin position="131"/>
        <end position="136"/>
    </location>
    <ligand>
        <name>S-adenosyl-L-methionine</name>
        <dbReference type="ChEBI" id="CHEBI:59789"/>
    </ligand>
</feature>
<name>TRMD_THEP1</name>
<reference key="1">
    <citation type="submission" date="2007-05" db="EMBL/GenBank/DDBJ databases">
        <title>Complete sequence of Thermotoga petrophila RKU-1.</title>
        <authorList>
            <consortium name="US DOE Joint Genome Institute"/>
            <person name="Copeland A."/>
            <person name="Lucas S."/>
            <person name="Lapidus A."/>
            <person name="Barry K."/>
            <person name="Glavina del Rio T."/>
            <person name="Dalin E."/>
            <person name="Tice H."/>
            <person name="Pitluck S."/>
            <person name="Sims D."/>
            <person name="Brettin T."/>
            <person name="Bruce D."/>
            <person name="Detter J.C."/>
            <person name="Han C."/>
            <person name="Tapia R."/>
            <person name="Schmutz J."/>
            <person name="Larimer F."/>
            <person name="Land M."/>
            <person name="Hauser L."/>
            <person name="Kyrpides N."/>
            <person name="Mikhailova N."/>
            <person name="Nelson K."/>
            <person name="Gogarten J.P."/>
            <person name="Noll K."/>
            <person name="Richardson P."/>
        </authorList>
    </citation>
    <scope>NUCLEOTIDE SEQUENCE [LARGE SCALE GENOMIC DNA]</scope>
    <source>
        <strain>ATCC BAA-488 / DSM 13995 / JCM 10881 / RKU-1</strain>
    </source>
</reference>
<dbReference type="EC" id="2.1.1.228" evidence="1"/>
<dbReference type="EMBL" id="CP000702">
    <property type="protein sequence ID" value="ABQ47237.1"/>
    <property type="molecule type" value="Genomic_DNA"/>
</dbReference>
<dbReference type="RefSeq" id="WP_004081985.1">
    <property type="nucleotide sequence ID" value="NC_009486.1"/>
</dbReference>
<dbReference type="SMR" id="A5IM14"/>
<dbReference type="STRING" id="390874.Tpet_1223"/>
<dbReference type="KEGG" id="tpt:Tpet_1223"/>
<dbReference type="eggNOG" id="COG0336">
    <property type="taxonomic scope" value="Bacteria"/>
</dbReference>
<dbReference type="HOGENOM" id="CLU_047363_0_1_0"/>
<dbReference type="Proteomes" id="UP000006558">
    <property type="component" value="Chromosome"/>
</dbReference>
<dbReference type="GO" id="GO:0005829">
    <property type="term" value="C:cytosol"/>
    <property type="evidence" value="ECO:0007669"/>
    <property type="project" value="TreeGrafter"/>
</dbReference>
<dbReference type="GO" id="GO:0052906">
    <property type="term" value="F:tRNA (guanine(37)-N1)-methyltransferase activity"/>
    <property type="evidence" value="ECO:0007669"/>
    <property type="project" value="UniProtKB-UniRule"/>
</dbReference>
<dbReference type="GO" id="GO:0002939">
    <property type="term" value="P:tRNA N1-guanine methylation"/>
    <property type="evidence" value="ECO:0007669"/>
    <property type="project" value="TreeGrafter"/>
</dbReference>
<dbReference type="CDD" id="cd18080">
    <property type="entry name" value="TrmD-like"/>
    <property type="match status" value="1"/>
</dbReference>
<dbReference type="FunFam" id="1.10.1270.20:FF:000001">
    <property type="entry name" value="tRNA (guanine-N(1)-)-methyltransferase"/>
    <property type="match status" value="1"/>
</dbReference>
<dbReference type="FunFam" id="3.40.1280.10:FF:000001">
    <property type="entry name" value="tRNA (guanine-N(1)-)-methyltransferase"/>
    <property type="match status" value="1"/>
</dbReference>
<dbReference type="Gene3D" id="3.40.1280.10">
    <property type="match status" value="1"/>
</dbReference>
<dbReference type="Gene3D" id="1.10.1270.20">
    <property type="entry name" value="tRNA(m1g37)methyltransferase, domain 2"/>
    <property type="match status" value="1"/>
</dbReference>
<dbReference type="HAMAP" id="MF_00605">
    <property type="entry name" value="TrmD"/>
    <property type="match status" value="1"/>
</dbReference>
<dbReference type="InterPro" id="IPR029028">
    <property type="entry name" value="Alpha/beta_knot_MTases"/>
</dbReference>
<dbReference type="InterPro" id="IPR023148">
    <property type="entry name" value="tRNA_m1G_MeTrfase_C_sf"/>
</dbReference>
<dbReference type="InterPro" id="IPR002649">
    <property type="entry name" value="tRNA_m1G_MeTrfase_TrmD"/>
</dbReference>
<dbReference type="InterPro" id="IPR029026">
    <property type="entry name" value="tRNA_m1G_MTases_N"/>
</dbReference>
<dbReference type="InterPro" id="IPR016009">
    <property type="entry name" value="tRNA_MeTrfase_TRMD/TRM10"/>
</dbReference>
<dbReference type="NCBIfam" id="NF000648">
    <property type="entry name" value="PRK00026.1"/>
    <property type="match status" value="1"/>
</dbReference>
<dbReference type="NCBIfam" id="TIGR00088">
    <property type="entry name" value="trmD"/>
    <property type="match status" value="1"/>
</dbReference>
<dbReference type="PANTHER" id="PTHR46417">
    <property type="entry name" value="TRNA (GUANINE-N(1)-)-METHYLTRANSFERASE"/>
    <property type="match status" value="1"/>
</dbReference>
<dbReference type="PANTHER" id="PTHR46417:SF1">
    <property type="entry name" value="TRNA (GUANINE-N(1)-)-METHYLTRANSFERASE"/>
    <property type="match status" value="1"/>
</dbReference>
<dbReference type="Pfam" id="PF01746">
    <property type="entry name" value="tRNA_m1G_MT"/>
    <property type="match status" value="1"/>
</dbReference>
<dbReference type="PIRSF" id="PIRSF000386">
    <property type="entry name" value="tRNA_mtase"/>
    <property type="match status" value="1"/>
</dbReference>
<dbReference type="SUPFAM" id="SSF75217">
    <property type="entry name" value="alpha/beta knot"/>
    <property type="match status" value="1"/>
</dbReference>
<accession>A5IM14</accession>